<feature type="chain" id="PRO_0000104751" description="Large ribosomal subunit protein uL15">
    <location>
        <begin position="1"/>
        <end position="150"/>
    </location>
</feature>
<feature type="region of interest" description="Disordered" evidence="2">
    <location>
        <begin position="1"/>
        <end position="44"/>
    </location>
</feature>
<feature type="compositionally biased region" description="Basic and acidic residues" evidence="2">
    <location>
        <begin position="1"/>
        <end position="13"/>
    </location>
</feature>
<evidence type="ECO:0000255" key="1">
    <source>
        <dbReference type="HAMAP-Rule" id="MF_01341"/>
    </source>
</evidence>
<evidence type="ECO:0000256" key="2">
    <source>
        <dbReference type="SAM" id="MobiDB-lite"/>
    </source>
</evidence>
<evidence type="ECO:0000305" key="3"/>
<sequence>MADNDAIKVHDLRPAPGAKTAKTRVGRGEASKGKTAGRGTKGTKARYQVRAGFEGGQLPLQMRLPKLRGFKNPFRTEYQVVNLDKLSAHFPEGGEVTVDALVSKGLVRRGQPVKVLGTGEITAAVQVKANAFSASAVEKIQAAGGSTETL</sequence>
<proteinExistence type="inferred from homology"/>
<name>RL15_MICLU</name>
<organism>
    <name type="scientific">Micrococcus luteus</name>
    <name type="common">Micrococcus lysodeikticus</name>
    <dbReference type="NCBI Taxonomy" id="1270"/>
    <lineage>
        <taxon>Bacteria</taxon>
        <taxon>Bacillati</taxon>
        <taxon>Actinomycetota</taxon>
        <taxon>Actinomycetes</taxon>
        <taxon>Micrococcales</taxon>
        <taxon>Micrococcaceae</taxon>
        <taxon>Micrococcus</taxon>
    </lineage>
</organism>
<accession>P33101</accession>
<dbReference type="EMBL" id="X17524">
    <property type="protein sequence ID" value="CAA35566.1"/>
    <property type="molecule type" value="Genomic_DNA"/>
</dbReference>
<dbReference type="PIR" id="S29890">
    <property type="entry name" value="S29890"/>
</dbReference>
<dbReference type="RefSeq" id="WP_012751036.1">
    <property type="nucleotide sequence ID" value="NZ_VEFX01000005.1"/>
</dbReference>
<dbReference type="SMR" id="P33101"/>
<dbReference type="STRING" id="1232675.GCA_000309825_02139"/>
<dbReference type="GeneID" id="93343565"/>
<dbReference type="PATRIC" id="fig|1270.31.peg.1694"/>
<dbReference type="OMA" id="WFEGGQM"/>
<dbReference type="GO" id="GO:0022625">
    <property type="term" value="C:cytosolic large ribosomal subunit"/>
    <property type="evidence" value="ECO:0007669"/>
    <property type="project" value="TreeGrafter"/>
</dbReference>
<dbReference type="GO" id="GO:0019843">
    <property type="term" value="F:rRNA binding"/>
    <property type="evidence" value="ECO:0007669"/>
    <property type="project" value="UniProtKB-UniRule"/>
</dbReference>
<dbReference type="GO" id="GO:0003735">
    <property type="term" value="F:structural constituent of ribosome"/>
    <property type="evidence" value="ECO:0007669"/>
    <property type="project" value="InterPro"/>
</dbReference>
<dbReference type="GO" id="GO:0006412">
    <property type="term" value="P:translation"/>
    <property type="evidence" value="ECO:0007669"/>
    <property type="project" value="UniProtKB-UniRule"/>
</dbReference>
<dbReference type="FunFam" id="3.100.10.10:FF:000005">
    <property type="entry name" value="50S ribosomal protein L15"/>
    <property type="match status" value="1"/>
</dbReference>
<dbReference type="Gene3D" id="3.100.10.10">
    <property type="match status" value="1"/>
</dbReference>
<dbReference type="HAMAP" id="MF_01341">
    <property type="entry name" value="Ribosomal_uL15"/>
    <property type="match status" value="1"/>
</dbReference>
<dbReference type="InterPro" id="IPR030878">
    <property type="entry name" value="Ribosomal_uL15"/>
</dbReference>
<dbReference type="InterPro" id="IPR021131">
    <property type="entry name" value="Ribosomal_uL15/eL18"/>
</dbReference>
<dbReference type="InterPro" id="IPR036227">
    <property type="entry name" value="Ribosomal_uL15/eL18_sf"/>
</dbReference>
<dbReference type="InterPro" id="IPR005749">
    <property type="entry name" value="Ribosomal_uL15_bac-type"/>
</dbReference>
<dbReference type="InterPro" id="IPR001196">
    <property type="entry name" value="Ribosomal_uL15_CS"/>
</dbReference>
<dbReference type="NCBIfam" id="TIGR01071">
    <property type="entry name" value="rplO_bact"/>
    <property type="match status" value="1"/>
</dbReference>
<dbReference type="PANTHER" id="PTHR12934">
    <property type="entry name" value="50S RIBOSOMAL PROTEIN L15"/>
    <property type="match status" value="1"/>
</dbReference>
<dbReference type="PANTHER" id="PTHR12934:SF11">
    <property type="entry name" value="LARGE RIBOSOMAL SUBUNIT PROTEIN UL15M"/>
    <property type="match status" value="1"/>
</dbReference>
<dbReference type="Pfam" id="PF00828">
    <property type="entry name" value="Ribosomal_L27A"/>
    <property type="match status" value="1"/>
</dbReference>
<dbReference type="SUPFAM" id="SSF52080">
    <property type="entry name" value="Ribosomal proteins L15p and L18e"/>
    <property type="match status" value="1"/>
</dbReference>
<dbReference type="PROSITE" id="PS00475">
    <property type="entry name" value="RIBOSOMAL_L15"/>
    <property type="match status" value="1"/>
</dbReference>
<reference key="1">
    <citation type="journal article" date="1989" name="J. Mol. Evol.">
        <title>Spectinomycin operon of Micrococcus luteus: evolutionary implications of organization and novel codon usage.</title>
        <authorList>
            <person name="Ohama T."/>
            <person name="Muto A."/>
            <person name="Osawa S."/>
        </authorList>
    </citation>
    <scope>NUCLEOTIDE SEQUENCE [GENOMIC DNA]</scope>
</reference>
<protein>
    <recommendedName>
        <fullName evidence="1">Large ribosomal subunit protein uL15</fullName>
    </recommendedName>
    <alternativeName>
        <fullName evidence="3">50S ribosomal protein L15</fullName>
    </alternativeName>
</protein>
<comment type="function">
    <text evidence="1">Binds to the 23S rRNA.</text>
</comment>
<comment type="subunit">
    <text evidence="1">Part of the 50S ribosomal subunit.</text>
</comment>
<comment type="similarity">
    <text evidence="1">Belongs to the universal ribosomal protein uL15 family.</text>
</comment>
<keyword id="KW-0687">Ribonucleoprotein</keyword>
<keyword id="KW-0689">Ribosomal protein</keyword>
<keyword id="KW-0694">RNA-binding</keyword>
<keyword id="KW-0699">rRNA-binding</keyword>
<gene>
    <name evidence="1" type="primary">rplO</name>
</gene>